<reference key="1">
    <citation type="journal article" date="1997" name="Science">
        <title>The complete genome sequence of Escherichia coli K-12.</title>
        <authorList>
            <person name="Blattner F.R."/>
            <person name="Plunkett G. III"/>
            <person name="Bloch C.A."/>
            <person name="Perna N.T."/>
            <person name="Burland V."/>
            <person name="Riley M."/>
            <person name="Collado-Vides J."/>
            <person name="Glasner J.D."/>
            <person name="Rode C.K."/>
            <person name="Mayhew G.F."/>
            <person name="Gregor J."/>
            <person name="Davis N.W."/>
            <person name="Kirkpatrick H.A."/>
            <person name="Goeden M.A."/>
            <person name="Rose D.J."/>
            <person name="Mau B."/>
            <person name="Shao Y."/>
        </authorList>
    </citation>
    <scope>NUCLEOTIDE SEQUENCE [LARGE SCALE GENOMIC DNA]</scope>
    <source>
        <strain>K12 / MG1655 / ATCC 47076</strain>
    </source>
</reference>
<reference key="2">
    <citation type="journal article" date="2006" name="Mol. Syst. Biol.">
        <title>Highly accurate genome sequences of Escherichia coli K-12 strains MG1655 and W3110.</title>
        <authorList>
            <person name="Hayashi K."/>
            <person name="Morooka N."/>
            <person name="Yamamoto Y."/>
            <person name="Fujita K."/>
            <person name="Isono K."/>
            <person name="Choi S."/>
            <person name="Ohtsubo E."/>
            <person name="Baba T."/>
            <person name="Wanner B.L."/>
            <person name="Mori H."/>
            <person name="Horiuchi T."/>
        </authorList>
    </citation>
    <scope>NUCLEOTIDE SEQUENCE [LARGE SCALE GENOMIC DNA]</scope>
    <source>
        <strain>K12 / W3110 / ATCC 27325 / DSM 5911</strain>
    </source>
</reference>
<gene>
    <name type="primary">ypfJ</name>
    <name type="ordered locus">b2475</name>
    <name type="ordered locus">JW2460</name>
</gene>
<name>YPFJ_ECOLI</name>
<comment type="subcellular location">
    <subcellularLocation>
        <location evidence="3">Membrane</location>
        <topology evidence="3">Single-pass membrane protein</topology>
    </subcellularLocation>
</comment>
<sequence>MRWQGRRESDNVEDRRNSSGGPSMGGPGFRLPSGKGGLILLIVVLVAGYYGVDLTGLMTGQPVSQQQSTRSISPNEDEAAKFTSVILATTEDTWGQQFEKMGKTYQQPKLVMYRGMTRTGCGAGQSIMGPFYCPADGTVYIDLSFYDDMKDKLGADGDFAQGYVIAHEVGHHVQKLLGIEPKVRQLQQNATQAEVNRLSVRMELQADCFAGVWGHSMQQQGVLETGDLEEALNAAQAIGDDRLQQQSQGRVVPDSFTHGTSQQRYSWFKRGFDSGDPAQCNTFGKSI</sequence>
<accession>P64429</accession>
<accession>P76563</accession>
<accession>Q2MAI3</accession>
<proteinExistence type="predicted"/>
<evidence type="ECO:0000255" key="1"/>
<evidence type="ECO:0000256" key="2">
    <source>
        <dbReference type="SAM" id="MobiDB-lite"/>
    </source>
</evidence>
<evidence type="ECO:0000305" key="3"/>
<protein>
    <recommendedName>
        <fullName>Uncharacterized protein YpfJ</fullName>
    </recommendedName>
</protein>
<keyword id="KW-0472">Membrane</keyword>
<keyword id="KW-1185">Reference proteome</keyword>
<keyword id="KW-0812">Transmembrane</keyword>
<keyword id="KW-1133">Transmembrane helix</keyword>
<dbReference type="EMBL" id="U00096">
    <property type="protein sequence ID" value="AAC75528.1"/>
    <property type="molecule type" value="Genomic_DNA"/>
</dbReference>
<dbReference type="EMBL" id="AP009048">
    <property type="protein sequence ID" value="BAE76723.1"/>
    <property type="molecule type" value="Genomic_DNA"/>
</dbReference>
<dbReference type="PIR" id="B65023">
    <property type="entry name" value="B65023"/>
</dbReference>
<dbReference type="RefSeq" id="NP_416970.1">
    <property type="nucleotide sequence ID" value="NC_000913.3"/>
</dbReference>
<dbReference type="RefSeq" id="WP_001267498.1">
    <property type="nucleotide sequence ID" value="NZ_SSUW01000003.1"/>
</dbReference>
<dbReference type="BioGRID" id="4260581">
    <property type="interactions" value="13"/>
</dbReference>
<dbReference type="DIP" id="DIP-48230N"/>
<dbReference type="FunCoup" id="P64429">
    <property type="interactions" value="101"/>
</dbReference>
<dbReference type="IntAct" id="P64429">
    <property type="interactions" value="4"/>
</dbReference>
<dbReference type="STRING" id="511145.b2475"/>
<dbReference type="jPOST" id="P64429"/>
<dbReference type="PaxDb" id="511145-b2475"/>
<dbReference type="EnsemblBacteria" id="AAC75528">
    <property type="protein sequence ID" value="AAC75528"/>
    <property type="gene ID" value="b2475"/>
</dbReference>
<dbReference type="GeneID" id="946956"/>
<dbReference type="KEGG" id="ecj:JW2460"/>
<dbReference type="KEGG" id="eco:b2475"/>
<dbReference type="KEGG" id="ecoc:C3026_13735"/>
<dbReference type="PATRIC" id="fig|511145.12.peg.2570"/>
<dbReference type="EchoBASE" id="EB3949"/>
<dbReference type="eggNOG" id="COG2321">
    <property type="taxonomic scope" value="Bacteria"/>
</dbReference>
<dbReference type="HOGENOM" id="CLU_059329_0_0_6"/>
<dbReference type="InParanoid" id="P64429"/>
<dbReference type="OMA" id="QKRSQGY"/>
<dbReference type="OrthoDB" id="9774900at2"/>
<dbReference type="PhylomeDB" id="P64429"/>
<dbReference type="BioCyc" id="EcoCyc:G7298-MONOMER"/>
<dbReference type="PRO" id="PR:P64429"/>
<dbReference type="Proteomes" id="UP000000625">
    <property type="component" value="Chromosome"/>
</dbReference>
<dbReference type="GO" id="GO:0016020">
    <property type="term" value="C:membrane"/>
    <property type="evidence" value="ECO:0007669"/>
    <property type="project" value="UniProtKB-SubCell"/>
</dbReference>
<dbReference type="InterPro" id="IPR007343">
    <property type="entry name" value="Uncharacterised_pept_Zn_put"/>
</dbReference>
<dbReference type="PANTHER" id="PTHR30168:SF0">
    <property type="entry name" value="INNER MEMBRANE PROTEIN"/>
    <property type="match status" value="1"/>
</dbReference>
<dbReference type="PANTHER" id="PTHR30168">
    <property type="entry name" value="PUTATIVE MEMBRANE PROTEIN YPFJ"/>
    <property type="match status" value="1"/>
</dbReference>
<dbReference type="Pfam" id="PF04228">
    <property type="entry name" value="Zn_peptidase"/>
    <property type="match status" value="1"/>
</dbReference>
<organism>
    <name type="scientific">Escherichia coli (strain K12)</name>
    <dbReference type="NCBI Taxonomy" id="83333"/>
    <lineage>
        <taxon>Bacteria</taxon>
        <taxon>Pseudomonadati</taxon>
        <taxon>Pseudomonadota</taxon>
        <taxon>Gammaproteobacteria</taxon>
        <taxon>Enterobacterales</taxon>
        <taxon>Enterobacteriaceae</taxon>
        <taxon>Escherichia</taxon>
    </lineage>
</organism>
<feature type="chain" id="PRO_0000201340" description="Uncharacterized protein YpfJ">
    <location>
        <begin position="1"/>
        <end position="287"/>
    </location>
</feature>
<feature type="transmembrane region" description="Helical" evidence="1">
    <location>
        <begin position="38"/>
        <end position="60"/>
    </location>
</feature>
<feature type="region of interest" description="Disordered" evidence="2">
    <location>
        <begin position="1"/>
        <end position="29"/>
    </location>
</feature>
<feature type="compositionally biased region" description="Basic and acidic residues" evidence="2">
    <location>
        <begin position="1"/>
        <end position="17"/>
    </location>
</feature>